<name>SYDND_THEPX</name>
<keyword id="KW-0030">Aminoacyl-tRNA synthetase</keyword>
<keyword id="KW-0067">ATP-binding</keyword>
<keyword id="KW-0963">Cytoplasm</keyword>
<keyword id="KW-0436">Ligase</keyword>
<keyword id="KW-0547">Nucleotide-binding</keyword>
<keyword id="KW-0648">Protein biosynthesis</keyword>
<comment type="function">
    <text evidence="1">Aspartyl-tRNA synthetase with relaxed tRNA specificity since it is able to aspartylate not only its cognate tRNA(Asp) but also tRNA(Asn). Reaction proceeds in two steps: L-aspartate is first activated by ATP to form Asp-AMP and then transferred to the acceptor end of tRNA(Asp/Asn).</text>
</comment>
<comment type="catalytic activity">
    <reaction evidence="1">
        <text>tRNA(Asx) + L-aspartate + ATP = L-aspartyl-tRNA(Asx) + AMP + diphosphate</text>
        <dbReference type="Rhea" id="RHEA:18349"/>
        <dbReference type="Rhea" id="RHEA-COMP:9710"/>
        <dbReference type="Rhea" id="RHEA-COMP:9711"/>
        <dbReference type="ChEBI" id="CHEBI:29991"/>
        <dbReference type="ChEBI" id="CHEBI:30616"/>
        <dbReference type="ChEBI" id="CHEBI:33019"/>
        <dbReference type="ChEBI" id="CHEBI:78442"/>
        <dbReference type="ChEBI" id="CHEBI:78516"/>
        <dbReference type="ChEBI" id="CHEBI:456215"/>
        <dbReference type="EC" id="6.1.1.23"/>
    </reaction>
</comment>
<comment type="subunit">
    <text evidence="1">Homodimer.</text>
</comment>
<comment type="subcellular location">
    <subcellularLocation>
        <location evidence="1">Cytoplasm</location>
    </subcellularLocation>
</comment>
<comment type="similarity">
    <text evidence="1">Belongs to the class-II aminoacyl-tRNA synthetase family. Type 1 subfamily.</text>
</comment>
<reference key="1">
    <citation type="submission" date="2008-01" db="EMBL/GenBank/DDBJ databases">
        <title>Complete sequence of Thermoanaerobacter sp. X514.</title>
        <authorList>
            <consortium name="US DOE Joint Genome Institute"/>
            <person name="Copeland A."/>
            <person name="Lucas S."/>
            <person name="Lapidus A."/>
            <person name="Barry K."/>
            <person name="Glavina del Rio T."/>
            <person name="Dalin E."/>
            <person name="Tice H."/>
            <person name="Pitluck S."/>
            <person name="Bruce D."/>
            <person name="Goodwin L."/>
            <person name="Saunders E."/>
            <person name="Brettin T."/>
            <person name="Detter J.C."/>
            <person name="Han C."/>
            <person name="Schmutz J."/>
            <person name="Larimer F."/>
            <person name="Land M."/>
            <person name="Hauser L."/>
            <person name="Kyrpides N."/>
            <person name="Kim E."/>
            <person name="Hemme C."/>
            <person name="Fields M.W."/>
            <person name="He Z."/>
            <person name="Zhou J."/>
            <person name="Richardson P."/>
        </authorList>
    </citation>
    <scope>NUCLEOTIDE SEQUENCE [LARGE SCALE GENOMIC DNA]</scope>
    <source>
        <strain>X514</strain>
    </source>
</reference>
<feature type="chain" id="PRO_1000091056" description="Aspartate--tRNA(Asp/Asn) ligase">
    <location>
        <begin position="1"/>
        <end position="592"/>
    </location>
</feature>
<feature type="region of interest" description="Aspartate" evidence="1">
    <location>
        <begin position="206"/>
        <end position="209"/>
    </location>
</feature>
<feature type="binding site" evidence="1">
    <location>
        <position position="182"/>
    </location>
    <ligand>
        <name>L-aspartate</name>
        <dbReference type="ChEBI" id="CHEBI:29991"/>
    </ligand>
</feature>
<feature type="binding site" evidence="1">
    <location>
        <begin position="228"/>
        <end position="230"/>
    </location>
    <ligand>
        <name>ATP</name>
        <dbReference type="ChEBI" id="CHEBI:30616"/>
    </ligand>
</feature>
<feature type="binding site" evidence="1">
    <location>
        <position position="228"/>
    </location>
    <ligand>
        <name>L-aspartate</name>
        <dbReference type="ChEBI" id="CHEBI:29991"/>
    </ligand>
</feature>
<feature type="binding site" evidence="1">
    <location>
        <position position="237"/>
    </location>
    <ligand>
        <name>ATP</name>
        <dbReference type="ChEBI" id="CHEBI:30616"/>
    </ligand>
</feature>
<feature type="binding site" evidence="1">
    <location>
        <position position="455"/>
    </location>
    <ligand>
        <name>L-aspartate</name>
        <dbReference type="ChEBI" id="CHEBI:29991"/>
    </ligand>
</feature>
<feature type="binding site" evidence="1">
    <location>
        <position position="489"/>
    </location>
    <ligand>
        <name>ATP</name>
        <dbReference type="ChEBI" id="CHEBI:30616"/>
    </ligand>
</feature>
<feature type="binding site" evidence="1">
    <location>
        <position position="496"/>
    </location>
    <ligand>
        <name>L-aspartate</name>
        <dbReference type="ChEBI" id="CHEBI:29991"/>
    </ligand>
</feature>
<feature type="binding site" evidence="1">
    <location>
        <begin position="541"/>
        <end position="544"/>
    </location>
    <ligand>
        <name>ATP</name>
        <dbReference type="ChEBI" id="CHEBI:30616"/>
    </ligand>
</feature>
<feature type="site" description="Important for tRNA non-discrimination" evidence="1">
    <location>
        <position position="38"/>
    </location>
</feature>
<sequence>MGEQLNGLKRTHMCGELTVEDVDKYVVVMGWVQRRRDHGGLVFIDLRDRTGIVQVVFSNEVSSEAFEKVQSVRSEYVLAIEGKVVKRSPENVNPKISTGEIEIYANTLKILSKSETPPFPIEDRSNVSEAVRLKYRYLDLRRPSMQKNLMTRFKITKVVRDFLNKNGFIEIETPLLIKSTPEGARDYLVPSRIYPGKFYALPQSPQIFKQLLMISGFDKYYQIAKCLRDEDLRADRQPEFTQIDIEMSFVEVEDVLKINEKMIAEIFKETLGIDVPIPFKRLSYQESMERFGTDKPDLRFGMELKDLSDIVAQSEFNVFKTALKNNGSVRGINVKGAASMPRRQLDELVEFAKTYGAKGLLWIQVFEKEVKSPATKFLSEEEMKKILERLEAEAGDLLLIVADKDEIVFDTLAHLRLELGKRFNLIDENKYEFVWIVDFPLLEYDEGEKRYVAKHHPFTAPKDEDIELLEKEPLKVRAKAYDIVLNGTEIGGGSIRIHDTELQKRMFKVLGFSEEKAWERFGFLMEAFKYGAPPHGGIAYGLDRLAMIITGSDTIRDVIAFPKTQNAVCLMTDAPSEVSEEQLKELHIKVDL</sequence>
<proteinExistence type="inferred from homology"/>
<organism>
    <name type="scientific">Thermoanaerobacter sp. (strain X514)</name>
    <dbReference type="NCBI Taxonomy" id="399726"/>
    <lineage>
        <taxon>Bacteria</taxon>
        <taxon>Bacillati</taxon>
        <taxon>Bacillota</taxon>
        <taxon>Clostridia</taxon>
        <taxon>Thermoanaerobacterales</taxon>
        <taxon>Thermoanaerobacteraceae</taxon>
        <taxon>Thermoanaerobacter</taxon>
    </lineage>
</organism>
<evidence type="ECO:0000255" key="1">
    <source>
        <dbReference type="HAMAP-Rule" id="MF_00044"/>
    </source>
</evidence>
<accession>B0K0N5</accession>
<gene>
    <name evidence="1" type="primary">aspS</name>
    <name type="ordered locus">Teth514_1473</name>
</gene>
<protein>
    <recommendedName>
        <fullName evidence="1">Aspartate--tRNA(Asp/Asn) ligase</fullName>
        <ecNumber evidence="1">6.1.1.23</ecNumber>
    </recommendedName>
    <alternativeName>
        <fullName evidence="1">Aspartyl-tRNA synthetase</fullName>
        <shortName evidence="1">AspRS</shortName>
    </alternativeName>
    <alternativeName>
        <fullName evidence="1">Non-discriminating aspartyl-tRNA synthetase</fullName>
        <shortName evidence="1">ND-AspRS</shortName>
    </alternativeName>
</protein>
<dbReference type="EC" id="6.1.1.23" evidence="1"/>
<dbReference type="EMBL" id="CP000923">
    <property type="protein sequence ID" value="ABY92760.1"/>
    <property type="molecule type" value="Genomic_DNA"/>
</dbReference>
<dbReference type="RefSeq" id="WP_009052302.1">
    <property type="nucleotide sequence ID" value="NC_010320.1"/>
</dbReference>
<dbReference type="SMR" id="B0K0N5"/>
<dbReference type="KEGG" id="tex:Teth514_1473"/>
<dbReference type="HOGENOM" id="CLU_014330_3_2_9"/>
<dbReference type="Proteomes" id="UP000002155">
    <property type="component" value="Chromosome"/>
</dbReference>
<dbReference type="GO" id="GO:0005737">
    <property type="term" value="C:cytoplasm"/>
    <property type="evidence" value="ECO:0007669"/>
    <property type="project" value="UniProtKB-SubCell"/>
</dbReference>
<dbReference type="GO" id="GO:0004815">
    <property type="term" value="F:aspartate-tRNA ligase activity"/>
    <property type="evidence" value="ECO:0007669"/>
    <property type="project" value="UniProtKB-UniRule"/>
</dbReference>
<dbReference type="GO" id="GO:0050560">
    <property type="term" value="F:aspartate-tRNA(Asn) ligase activity"/>
    <property type="evidence" value="ECO:0007669"/>
    <property type="project" value="UniProtKB-EC"/>
</dbReference>
<dbReference type="GO" id="GO:0005524">
    <property type="term" value="F:ATP binding"/>
    <property type="evidence" value="ECO:0007669"/>
    <property type="project" value="UniProtKB-UniRule"/>
</dbReference>
<dbReference type="GO" id="GO:0140096">
    <property type="term" value="F:catalytic activity, acting on a protein"/>
    <property type="evidence" value="ECO:0007669"/>
    <property type="project" value="UniProtKB-ARBA"/>
</dbReference>
<dbReference type="GO" id="GO:0003676">
    <property type="term" value="F:nucleic acid binding"/>
    <property type="evidence" value="ECO:0007669"/>
    <property type="project" value="InterPro"/>
</dbReference>
<dbReference type="GO" id="GO:0016740">
    <property type="term" value="F:transferase activity"/>
    <property type="evidence" value="ECO:0007669"/>
    <property type="project" value="UniProtKB-ARBA"/>
</dbReference>
<dbReference type="GO" id="GO:0006422">
    <property type="term" value="P:aspartyl-tRNA aminoacylation"/>
    <property type="evidence" value="ECO:0007669"/>
    <property type="project" value="UniProtKB-UniRule"/>
</dbReference>
<dbReference type="CDD" id="cd00777">
    <property type="entry name" value="AspRS_core"/>
    <property type="match status" value="1"/>
</dbReference>
<dbReference type="CDD" id="cd04317">
    <property type="entry name" value="EcAspRS_like_N"/>
    <property type="match status" value="1"/>
</dbReference>
<dbReference type="Gene3D" id="3.30.930.10">
    <property type="entry name" value="Bira Bifunctional Protein, Domain 2"/>
    <property type="match status" value="1"/>
</dbReference>
<dbReference type="Gene3D" id="3.30.1360.30">
    <property type="entry name" value="GAD-like domain"/>
    <property type="match status" value="1"/>
</dbReference>
<dbReference type="Gene3D" id="2.40.50.140">
    <property type="entry name" value="Nucleic acid-binding proteins"/>
    <property type="match status" value="1"/>
</dbReference>
<dbReference type="HAMAP" id="MF_00044">
    <property type="entry name" value="Asp_tRNA_synth_type1"/>
    <property type="match status" value="1"/>
</dbReference>
<dbReference type="InterPro" id="IPR004364">
    <property type="entry name" value="Aa-tRNA-synt_II"/>
</dbReference>
<dbReference type="InterPro" id="IPR006195">
    <property type="entry name" value="aa-tRNA-synth_II"/>
</dbReference>
<dbReference type="InterPro" id="IPR045864">
    <property type="entry name" value="aa-tRNA-synth_II/BPL/LPL"/>
</dbReference>
<dbReference type="InterPro" id="IPR004524">
    <property type="entry name" value="Asp-tRNA-ligase_1"/>
</dbReference>
<dbReference type="InterPro" id="IPR047089">
    <property type="entry name" value="Asp-tRNA-ligase_1_N"/>
</dbReference>
<dbReference type="InterPro" id="IPR002312">
    <property type="entry name" value="Asp/Asn-tRNA-synth_IIb"/>
</dbReference>
<dbReference type="InterPro" id="IPR047090">
    <property type="entry name" value="AspRS_core"/>
</dbReference>
<dbReference type="InterPro" id="IPR004115">
    <property type="entry name" value="GAD-like_sf"/>
</dbReference>
<dbReference type="InterPro" id="IPR029351">
    <property type="entry name" value="GAD_dom"/>
</dbReference>
<dbReference type="InterPro" id="IPR012340">
    <property type="entry name" value="NA-bd_OB-fold"/>
</dbReference>
<dbReference type="InterPro" id="IPR004365">
    <property type="entry name" value="NA-bd_OB_tRNA"/>
</dbReference>
<dbReference type="NCBIfam" id="TIGR00459">
    <property type="entry name" value="aspS_bact"/>
    <property type="match status" value="1"/>
</dbReference>
<dbReference type="NCBIfam" id="NF001750">
    <property type="entry name" value="PRK00476.1"/>
    <property type="match status" value="1"/>
</dbReference>
<dbReference type="PANTHER" id="PTHR22594:SF5">
    <property type="entry name" value="ASPARTATE--TRNA LIGASE, MITOCHONDRIAL"/>
    <property type="match status" value="1"/>
</dbReference>
<dbReference type="PANTHER" id="PTHR22594">
    <property type="entry name" value="ASPARTYL/LYSYL-TRNA SYNTHETASE"/>
    <property type="match status" value="1"/>
</dbReference>
<dbReference type="Pfam" id="PF02938">
    <property type="entry name" value="GAD"/>
    <property type="match status" value="1"/>
</dbReference>
<dbReference type="Pfam" id="PF00152">
    <property type="entry name" value="tRNA-synt_2"/>
    <property type="match status" value="1"/>
</dbReference>
<dbReference type="Pfam" id="PF01336">
    <property type="entry name" value="tRNA_anti-codon"/>
    <property type="match status" value="1"/>
</dbReference>
<dbReference type="PRINTS" id="PR01042">
    <property type="entry name" value="TRNASYNTHASP"/>
</dbReference>
<dbReference type="SUPFAM" id="SSF55681">
    <property type="entry name" value="Class II aaRS and biotin synthetases"/>
    <property type="match status" value="1"/>
</dbReference>
<dbReference type="SUPFAM" id="SSF55261">
    <property type="entry name" value="GAD domain-like"/>
    <property type="match status" value="1"/>
</dbReference>
<dbReference type="SUPFAM" id="SSF50249">
    <property type="entry name" value="Nucleic acid-binding proteins"/>
    <property type="match status" value="1"/>
</dbReference>
<dbReference type="PROSITE" id="PS50862">
    <property type="entry name" value="AA_TRNA_LIGASE_II"/>
    <property type="match status" value="1"/>
</dbReference>